<feature type="chain" id="PRO_1000008611" description="4-hydroxy-tetrahydrodipicolinate reductase">
    <location>
        <begin position="1"/>
        <end position="268"/>
    </location>
</feature>
<feature type="active site" description="Proton donor/acceptor" evidence="1">
    <location>
        <position position="156"/>
    </location>
</feature>
<feature type="active site" description="Proton donor" evidence="1">
    <location>
        <position position="160"/>
    </location>
</feature>
<feature type="binding site" evidence="1">
    <location>
        <begin position="8"/>
        <end position="13"/>
    </location>
    <ligand>
        <name>NAD(+)</name>
        <dbReference type="ChEBI" id="CHEBI:57540"/>
    </ligand>
</feature>
<feature type="binding site" evidence="1">
    <location>
        <position position="35"/>
    </location>
    <ligand>
        <name>NAD(+)</name>
        <dbReference type="ChEBI" id="CHEBI:57540"/>
    </ligand>
</feature>
<feature type="binding site" evidence="1">
    <location>
        <position position="36"/>
    </location>
    <ligand>
        <name>NADP(+)</name>
        <dbReference type="ChEBI" id="CHEBI:58349"/>
    </ligand>
</feature>
<feature type="binding site" evidence="1">
    <location>
        <begin position="99"/>
        <end position="101"/>
    </location>
    <ligand>
        <name>NAD(+)</name>
        <dbReference type="ChEBI" id="CHEBI:57540"/>
    </ligand>
</feature>
<feature type="binding site" evidence="1">
    <location>
        <begin position="123"/>
        <end position="126"/>
    </location>
    <ligand>
        <name>NAD(+)</name>
        <dbReference type="ChEBI" id="CHEBI:57540"/>
    </ligand>
</feature>
<feature type="binding site" evidence="1">
    <location>
        <position position="157"/>
    </location>
    <ligand>
        <name>(S)-2,3,4,5-tetrahydrodipicolinate</name>
        <dbReference type="ChEBI" id="CHEBI:16845"/>
    </ligand>
</feature>
<feature type="binding site" evidence="1">
    <location>
        <begin position="166"/>
        <end position="167"/>
    </location>
    <ligand>
        <name>(S)-2,3,4,5-tetrahydrodipicolinate</name>
        <dbReference type="ChEBI" id="CHEBI:16845"/>
    </ligand>
</feature>
<keyword id="KW-0028">Amino-acid biosynthesis</keyword>
<keyword id="KW-0963">Cytoplasm</keyword>
<keyword id="KW-0220">Diaminopimelate biosynthesis</keyword>
<keyword id="KW-0457">Lysine biosynthesis</keyword>
<keyword id="KW-0520">NAD</keyword>
<keyword id="KW-0521">NADP</keyword>
<keyword id="KW-0560">Oxidoreductase</keyword>
<name>DAPB_PSEAB</name>
<protein>
    <recommendedName>
        <fullName evidence="1">4-hydroxy-tetrahydrodipicolinate reductase</fullName>
        <shortName evidence="1">HTPA reductase</shortName>
        <ecNumber evidence="1">1.17.1.8</ecNumber>
    </recommendedName>
</protein>
<organism>
    <name type="scientific">Pseudomonas aeruginosa (strain UCBPP-PA14)</name>
    <dbReference type="NCBI Taxonomy" id="208963"/>
    <lineage>
        <taxon>Bacteria</taxon>
        <taxon>Pseudomonadati</taxon>
        <taxon>Pseudomonadota</taxon>
        <taxon>Gammaproteobacteria</taxon>
        <taxon>Pseudomonadales</taxon>
        <taxon>Pseudomonadaceae</taxon>
        <taxon>Pseudomonas</taxon>
    </lineage>
</organism>
<evidence type="ECO:0000255" key="1">
    <source>
        <dbReference type="HAMAP-Rule" id="MF_00102"/>
    </source>
</evidence>
<evidence type="ECO:0000305" key="2"/>
<comment type="function">
    <text evidence="1">Catalyzes the conversion of 4-hydroxy-tetrahydrodipicolinate (HTPA) to tetrahydrodipicolinate.</text>
</comment>
<comment type="catalytic activity">
    <reaction evidence="1">
        <text>(S)-2,3,4,5-tetrahydrodipicolinate + NAD(+) + H2O = (2S,4S)-4-hydroxy-2,3,4,5-tetrahydrodipicolinate + NADH + H(+)</text>
        <dbReference type="Rhea" id="RHEA:35323"/>
        <dbReference type="ChEBI" id="CHEBI:15377"/>
        <dbReference type="ChEBI" id="CHEBI:15378"/>
        <dbReference type="ChEBI" id="CHEBI:16845"/>
        <dbReference type="ChEBI" id="CHEBI:57540"/>
        <dbReference type="ChEBI" id="CHEBI:57945"/>
        <dbReference type="ChEBI" id="CHEBI:67139"/>
        <dbReference type="EC" id="1.17.1.8"/>
    </reaction>
</comment>
<comment type="catalytic activity">
    <reaction evidence="1">
        <text>(S)-2,3,4,5-tetrahydrodipicolinate + NADP(+) + H2O = (2S,4S)-4-hydroxy-2,3,4,5-tetrahydrodipicolinate + NADPH + H(+)</text>
        <dbReference type="Rhea" id="RHEA:35331"/>
        <dbReference type="ChEBI" id="CHEBI:15377"/>
        <dbReference type="ChEBI" id="CHEBI:15378"/>
        <dbReference type="ChEBI" id="CHEBI:16845"/>
        <dbReference type="ChEBI" id="CHEBI:57783"/>
        <dbReference type="ChEBI" id="CHEBI:58349"/>
        <dbReference type="ChEBI" id="CHEBI:67139"/>
        <dbReference type="EC" id="1.17.1.8"/>
    </reaction>
</comment>
<comment type="pathway">
    <text evidence="1">Amino-acid biosynthesis; L-lysine biosynthesis via DAP pathway; (S)-tetrahydrodipicolinate from L-aspartate: step 4/4.</text>
</comment>
<comment type="subcellular location">
    <subcellularLocation>
        <location evidence="1">Cytoplasm</location>
    </subcellularLocation>
</comment>
<comment type="similarity">
    <text evidence="1">Belongs to the DapB family.</text>
</comment>
<comment type="caution">
    <text evidence="2">Was originally thought to be a dihydrodipicolinate reductase (DHDPR), catalyzing the conversion of dihydrodipicolinate to tetrahydrodipicolinate. However, it was shown in E.coli that the substrate of the enzymatic reaction is not dihydrodipicolinate (DHDP) but in fact (2S,4S)-4-hydroxy-2,3,4,5-tetrahydrodipicolinic acid (HTPA), the product released by the DapA-catalyzed reaction.</text>
</comment>
<reference key="1">
    <citation type="journal article" date="2006" name="Genome Biol.">
        <title>Genomic analysis reveals that Pseudomonas aeruginosa virulence is combinatorial.</title>
        <authorList>
            <person name="Lee D.G."/>
            <person name="Urbach J.M."/>
            <person name="Wu G."/>
            <person name="Liberati N.T."/>
            <person name="Feinbaum R.L."/>
            <person name="Miyata S."/>
            <person name="Diggins L.T."/>
            <person name="He J."/>
            <person name="Saucier M."/>
            <person name="Deziel E."/>
            <person name="Friedman L."/>
            <person name="Li L."/>
            <person name="Grills G."/>
            <person name="Montgomery K."/>
            <person name="Kucherlapati R."/>
            <person name="Rahme L.G."/>
            <person name="Ausubel F.M."/>
        </authorList>
    </citation>
    <scope>NUCLEOTIDE SEQUENCE [LARGE SCALE GENOMIC DNA]</scope>
    <source>
        <strain>UCBPP-PA14</strain>
    </source>
</reference>
<accession>Q02FR3</accession>
<proteinExistence type="inferred from homology"/>
<gene>
    <name evidence="1" type="primary">dapB</name>
    <name type="ordered locus">PA14_62940</name>
</gene>
<dbReference type="EC" id="1.17.1.8" evidence="1"/>
<dbReference type="EMBL" id="CP000438">
    <property type="protein sequence ID" value="ABJ14142.1"/>
    <property type="molecule type" value="Genomic_DNA"/>
</dbReference>
<dbReference type="RefSeq" id="WP_003095210.1">
    <property type="nucleotide sequence ID" value="NZ_CP034244.1"/>
</dbReference>
<dbReference type="SMR" id="Q02FR3"/>
<dbReference type="KEGG" id="pau:PA14_62940"/>
<dbReference type="PseudoCAP" id="PA14_62940"/>
<dbReference type="HOGENOM" id="CLU_047479_2_1_6"/>
<dbReference type="BioCyc" id="PAER208963:G1G74-5324-MONOMER"/>
<dbReference type="UniPathway" id="UPA00034">
    <property type="reaction ID" value="UER00018"/>
</dbReference>
<dbReference type="Proteomes" id="UP000000653">
    <property type="component" value="Chromosome"/>
</dbReference>
<dbReference type="GO" id="GO:0005829">
    <property type="term" value="C:cytosol"/>
    <property type="evidence" value="ECO:0007669"/>
    <property type="project" value="TreeGrafter"/>
</dbReference>
<dbReference type="GO" id="GO:0008839">
    <property type="term" value="F:4-hydroxy-tetrahydrodipicolinate reductase"/>
    <property type="evidence" value="ECO:0007669"/>
    <property type="project" value="UniProtKB-EC"/>
</dbReference>
<dbReference type="GO" id="GO:0051287">
    <property type="term" value="F:NAD binding"/>
    <property type="evidence" value="ECO:0007669"/>
    <property type="project" value="UniProtKB-UniRule"/>
</dbReference>
<dbReference type="GO" id="GO:0050661">
    <property type="term" value="F:NADP binding"/>
    <property type="evidence" value="ECO:0007669"/>
    <property type="project" value="UniProtKB-UniRule"/>
</dbReference>
<dbReference type="GO" id="GO:0016726">
    <property type="term" value="F:oxidoreductase activity, acting on CH or CH2 groups, NAD or NADP as acceptor"/>
    <property type="evidence" value="ECO:0007669"/>
    <property type="project" value="UniProtKB-UniRule"/>
</dbReference>
<dbReference type="GO" id="GO:0019877">
    <property type="term" value="P:diaminopimelate biosynthetic process"/>
    <property type="evidence" value="ECO:0007669"/>
    <property type="project" value="UniProtKB-UniRule"/>
</dbReference>
<dbReference type="GO" id="GO:0009089">
    <property type="term" value="P:lysine biosynthetic process via diaminopimelate"/>
    <property type="evidence" value="ECO:0007669"/>
    <property type="project" value="UniProtKB-UniRule"/>
</dbReference>
<dbReference type="CDD" id="cd02274">
    <property type="entry name" value="DHDPR_N"/>
    <property type="match status" value="1"/>
</dbReference>
<dbReference type="FunFam" id="3.30.360.10:FF:000004">
    <property type="entry name" value="4-hydroxy-tetrahydrodipicolinate reductase"/>
    <property type="match status" value="1"/>
</dbReference>
<dbReference type="FunFam" id="3.40.50.720:FF:000048">
    <property type="entry name" value="4-hydroxy-tetrahydrodipicolinate reductase"/>
    <property type="match status" value="1"/>
</dbReference>
<dbReference type="Gene3D" id="3.30.360.10">
    <property type="entry name" value="Dihydrodipicolinate Reductase, domain 2"/>
    <property type="match status" value="1"/>
</dbReference>
<dbReference type="Gene3D" id="3.40.50.720">
    <property type="entry name" value="NAD(P)-binding Rossmann-like Domain"/>
    <property type="match status" value="1"/>
</dbReference>
<dbReference type="HAMAP" id="MF_00102">
    <property type="entry name" value="DapB"/>
    <property type="match status" value="1"/>
</dbReference>
<dbReference type="InterPro" id="IPR022663">
    <property type="entry name" value="DapB_C"/>
</dbReference>
<dbReference type="InterPro" id="IPR000846">
    <property type="entry name" value="DapB_N"/>
</dbReference>
<dbReference type="InterPro" id="IPR022664">
    <property type="entry name" value="DapB_N_CS"/>
</dbReference>
<dbReference type="InterPro" id="IPR023940">
    <property type="entry name" value="DHDPR_bac"/>
</dbReference>
<dbReference type="InterPro" id="IPR036291">
    <property type="entry name" value="NAD(P)-bd_dom_sf"/>
</dbReference>
<dbReference type="NCBIfam" id="TIGR00036">
    <property type="entry name" value="dapB"/>
    <property type="match status" value="1"/>
</dbReference>
<dbReference type="PANTHER" id="PTHR20836:SF0">
    <property type="entry name" value="4-HYDROXY-TETRAHYDRODIPICOLINATE REDUCTASE 1, CHLOROPLASTIC-RELATED"/>
    <property type="match status" value="1"/>
</dbReference>
<dbReference type="PANTHER" id="PTHR20836">
    <property type="entry name" value="DIHYDRODIPICOLINATE REDUCTASE"/>
    <property type="match status" value="1"/>
</dbReference>
<dbReference type="Pfam" id="PF05173">
    <property type="entry name" value="DapB_C"/>
    <property type="match status" value="1"/>
</dbReference>
<dbReference type="Pfam" id="PF01113">
    <property type="entry name" value="DapB_N"/>
    <property type="match status" value="1"/>
</dbReference>
<dbReference type="PIRSF" id="PIRSF000161">
    <property type="entry name" value="DHPR"/>
    <property type="match status" value="1"/>
</dbReference>
<dbReference type="SUPFAM" id="SSF55347">
    <property type="entry name" value="Glyceraldehyde-3-phosphate dehydrogenase-like, C-terminal domain"/>
    <property type="match status" value="1"/>
</dbReference>
<dbReference type="SUPFAM" id="SSF51735">
    <property type="entry name" value="NAD(P)-binding Rossmann-fold domains"/>
    <property type="match status" value="1"/>
</dbReference>
<dbReference type="PROSITE" id="PS01298">
    <property type="entry name" value="DAPB"/>
    <property type="match status" value="1"/>
</dbReference>
<sequence>MRRIAVVGAAGRMGKNLIEAVQQTGGAAGLTAAVDRPDSTLVGADAGELAGLGRIGVPLSGDLGKVCEEFDVLIDFTHPSVTLKNIEQCRKARRAMVIGTTGFSADEKLLLAEAAKDIPIVFAANFSVGVNLCLKLLDTAARVLGDEVDIEIIEAHHRHKVDAPSGTALRMGEVVAQALGRDLQEVAVYGREGQTGARARETIGFATVRAGDVVGDHTVLFAAEGERVEITHKASSRMTFARGAVRAALWLEGKENGLYDMQDVLGLR</sequence>